<name>RF3_FRATF</name>
<sequence length="525" mass="59416">MSEYLQQIAKRRTFAIISHPDAGKTTITEKMLLFGNAIKTAGTVKAKKSGIHATSDWMEMEKQRGISITTSVMQFPYNGRIINLLDTPGHEDFSEDTYRTLTAVDSALMVVDAVKGVEDRTIKLMNVCRLRDTPIVTFMNKFDRDTRDPLELLDEVENILKIKCAPMNWPIGMGKYFKGVYDLYNDEVTLFETGHGHEIYPYKKIKGLANAKDSIGIDLYEDLEMEIDLVRGASHEFDEQEFLEGNLTPVYFGTALSNFGVKEMMDGFTRYAPAPQHREADQRVVAADEQKLTGFVFKIQANMDEKHRNRIAFFRICSGKYEKGMKIFHERTGKQMQISKALTFMAGEREQVEEGYAGDIIGLHNHGSIQIGDSFTQGEKLKFKGIPNFAPEIFKRVKLNDPLKMKALQKGLVQLSEEGATQVFKPFISNDLVLGAVGVLQFDVVAQRLASEYNVKCSYEGVNVTLARWIFCNDEKKLNDFKKKYEVNLAYDGAGYLTYLAPTGVNLQLAQEKNPDIIFSATREH</sequence>
<reference key="1">
    <citation type="journal article" date="2009" name="PLoS ONE">
        <title>Complete genome sequence of Francisella tularensis subspecies holarctica FTNF002-00.</title>
        <authorList>
            <person name="Barabote R.D."/>
            <person name="Xie G."/>
            <person name="Brettin T.S."/>
            <person name="Hinrichs S.H."/>
            <person name="Fey P.D."/>
            <person name="Jay J.J."/>
            <person name="Engle J.L."/>
            <person name="Godbole S.D."/>
            <person name="Noronha J.M."/>
            <person name="Scheuermann R.H."/>
            <person name="Zhou L.W."/>
            <person name="Lion C."/>
            <person name="Dempsey M.P."/>
        </authorList>
    </citation>
    <scope>NUCLEOTIDE SEQUENCE [LARGE SCALE GENOMIC DNA]</scope>
    <source>
        <strain>FTNF002-00 / FTA</strain>
    </source>
</reference>
<protein>
    <recommendedName>
        <fullName evidence="1">Peptide chain release factor 3</fullName>
        <shortName evidence="1">RF-3</shortName>
    </recommendedName>
</protein>
<gene>
    <name evidence="1" type="primary">prfC</name>
    <name type="ordered locus">FTA_1756</name>
</gene>
<proteinExistence type="inferred from homology"/>
<evidence type="ECO:0000255" key="1">
    <source>
        <dbReference type="HAMAP-Rule" id="MF_00072"/>
    </source>
</evidence>
<comment type="function">
    <text evidence="1">Increases the formation of ribosomal termination complexes and stimulates activities of RF-1 and RF-2. It binds guanine nucleotides and has strong preference for UGA stop codons. It may interact directly with the ribosome. The stimulation of RF-1 and RF-2 is significantly reduced by GTP and GDP, but not by GMP.</text>
</comment>
<comment type="subcellular location">
    <subcellularLocation>
        <location evidence="1">Cytoplasm</location>
    </subcellularLocation>
</comment>
<comment type="similarity">
    <text evidence="1">Belongs to the TRAFAC class translation factor GTPase superfamily. Classic translation factor GTPase family. PrfC subfamily.</text>
</comment>
<organism>
    <name type="scientific">Francisella tularensis subsp. holarctica (strain FTNF002-00 / FTA)</name>
    <dbReference type="NCBI Taxonomy" id="458234"/>
    <lineage>
        <taxon>Bacteria</taxon>
        <taxon>Pseudomonadati</taxon>
        <taxon>Pseudomonadota</taxon>
        <taxon>Gammaproteobacteria</taxon>
        <taxon>Thiotrichales</taxon>
        <taxon>Francisellaceae</taxon>
        <taxon>Francisella</taxon>
    </lineage>
</organism>
<keyword id="KW-0963">Cytoplasm</keyword>
<keyword id="KW-0342">GTP-binding</keyword>
<keyword id="KW-0547">Nucleotide-binding</keyword>
<keyword id="KW-0648">Protein biosynthesis</keyword>
<dbReference type="EMBL" id="CP000803">
    <property type="protein sequence ID" value="ABU62231.1"/>
    <property type="molecule type" value="Genomic_DNA"/>
</dbReference>
<dbReference type="RefSeq" id="WP_003017082.1">
    <property type="nucleotide sequence ID" value="NC_009749.1"/>
</dbReference>
<dbReference type="SMR" id="A7NE28"/>
<dbReference type="KEGG" id="fta:FTA_1756"/>
<dbReference type="HOGENOM" id="CLU_002794_2_1_6"/>
<dbReference type="GO" id="GO:0005829">
    <property type="term" value="C:cytosol"/>
    <property type="evidence" value="ECO:0007669"/>
    <property type="project" value="TreeGrafter"/>
</dbReference>
<dbReference type="GO" id="GO:0005525">
    <property type="term" value="F:GTP binding"/>
    <property type="evidence" value="ECO:0007669"/>
    <property type="project" value="UniProtKB-UniRule"/>
</dbReference>
<dbReference type="GO" id="GO:0003924">
    <property type="term" value="F:GTPase activity"/>
    <property type="evidence" value="ECO:0007669"/>
    <property type="project" value="InterPro"/>
</dbReference>
<dbReference type="GO" id="GO:0097216">
    <property type="term" value="F:guanosine tetraphosphate binding"/>
    <property type="evidence" value="ECO:0007669"/>
    <property type="project" value="UniProtKB-ARBA"/>
</dbReference>
<dbReference type="GO" id="GO:0016150">
    <property type="term" value="F:translation release factor activity, codon nonspecific"/>
    <property type="evidence" value="ECO:0007669"/>
    <property type="project" value="TreeGrafter"/>
</dbReference>
<dbReference type="GO" id="GO:0016149">
    <property type="term" value="F:translation release factor activity, codon specific"/>
    <property type="evidence" value="ECO:0007669"/>
    <property type="project" value="UniProtKB-UniRule"/>
</dbReference>
<dbReference type="GO" id="GO:0006449">
    <property type="term" value="P:regulation of translational termination"/>
    <property type="evidence" value="ECO:0007669"/>
    <property type="project" value="UniProtKB-UniRule"/>
</dbReference>
<dbReference type="CDD" id="cd04169">
    <property type="entry name" value="RF3"/>
    <property type="match status" value="1"/>
</dbReference>
<dbReference type="CDD" id="cd16259">
    <property type="entry name" value="RF3_III"/>
    <property type="match status" value="1"/>
</dbReference>
<dbReference type="FunFam" id="2.40.30.10:FF:000040">
    <property type="entry name" value="Peptide chain release factor 3"/>
    <property type="match status" value="1"/>
</dbReference>
<dbReference type="FunFam" id="3.30.70.3280:FF:000001">
    <property type="entry name" value="Peptide chain release factor 3"/>
    <property type="match status" value="1"/>
</dbReference>
<dbReference type="FunFam" id="3.40.50.300:FF:000542">
    <property type="entry name" value="Peptide chain release factor 3"/>
    <property type="match status" value="1"/>
</dbReference>
<dbReference type="Gene3D" id="3.40.50.300">
    <property type="entry name" value="P-loop containing nucleotide triphosphate hydrolases"/>
    <property type="match status" value="1"/>
</dbReference>
<dbReference type="Gene3D" id="3.30.70.3280">
    <property type="entry name" value="Peptide chain release factor 3, domain III"/>
    <property type="match status" value="1"/>
</dbReference>
<dbReference type="Gene3D" id="2.40.30.10">
    <property type="entry name" value="Translation factors"/>
    <property type="match status" value="1"/>
</dbReference>
<dbReference type="HAMAP" id="MF_00072">
    <property type="entry name" value="Rel_fac_3"/>
    <property type="match status" value="1"/>
</dbReference>
<dbReference type="InterPro" id="IPR053905">
    <property type="entry name" value="EF-G-like_DII"/>
</dbReference>
<dbReference type="InterPro" id="IPR035647">
    <property type="entry name" value="EFG_III/V"/>
</dbReference>
<dbReference type="InterPro" id="IPR031157">
    <property type="entry name" value="G_TR_CS"/>
</dbReference>
<dbReference type="InterPro" id="IPR027417">
    <property type="entry name" value="P-loop_NTPase"/>
</dbReference>
<dbReference type="InterPro" id="IPR004548">
    <property type="entry name" value="PrfC"/>
</dbReference>
<dbReference type="InterPro" id="IPR032090">
    <property type="entry name" value="RF3_C"/>
</dbReference>
<dbReference type="InterPro" id="IPR038467">
    <property type="entry name" value="RF3_dom_3_sf"/>
</dbReference>
<dbReference type="InterPro" id="IPR041732">
    <property type="entry name" value="RF3_GTP-bd"/>
</dbReference>
<dbReference type="InterPro" id="IPR005225">
    <property type="entry name" value="Small_GTP-bd"/>
</dbReference>
<dbReference type="InterPro" id="IPR000795">
    <property type="entry name" value="T_Tr_GTP-bd_dom"/>
</dbReference>
<dbReference type="InterPro" id="IPR009000">
    <property type="entry name" value="Transl_B-barrel_sf"/>
</dbReference>
<dbReference type="NCBIfam" id="TIGR00503">
    <property type="entry name" value="prfC"/>
    <property type="match status" value="1"/>
</dbReference>
<dbReference type="NCBIfam" id="NF001964">
    <property type="entry name" value="PRK00741.1"/>
    <property type="match status" value="1"/>
</dbReference>
<dbReference type="NCBIfam" id="TIGR00231">
    <property type="entry name" value="small_GTP"/>
    <property type="match status" value="1"/>
</dbReference>
<dbReference type="PANTHER" id="PTHR43556">
    <property type="entry name" value="PEPTIDE CHAIN RELEASE FACTOR RF3"/>
    <property type="match status" value="1"/>
</dbReference>
<dbReference type="PANTHER" id="PTHR43556:SF2">
    <property type="entry name" value="PEPTIDE CHAIN RELEASE FACTOR RF3"/>
    <property type="match status" value="1"/>
</dbReference>
<dbReference type="Pfam" id="PF22042">
    <property type="entry name" value="EF-G_D2"/>
    <property type="match status" value="1"/>
</dbReference>
<dbReference type="Pfam" id="PF00009">
    <property type="entry name" value="GTP_EFTU"/>
    <property type="match status" value="1"/>
</dbReference>
<dbReference type="Pfam" id="PF16658">
    <property type="entry name" value="RF3_C"/>
    <property type="match status" value="1"/>
</dbReference>
<dbReference type="PRINTS" id="PR00315">
    <property type="entry name" value="ELONGATNFCT"/>
</dbReference>
<dbReference type="SUPFAM" id="SSF54980">
    <property type="entry name" value="EF-G C-terminal domain-like"/>
    <property type="match status" value="1"/>
</dbReference>
<dbReference type="SUPFAM" id="SSF52540">
    <property type="entry name" value="P-loop containing nucleoside triphosphate hydrolases"/>
    <property type="match status" value="1"/>
</dbReference>
<dbReference type="SUPFAM" id="SSF50447">
    <property type="entry name" value="Translation proteins"/>
    <property type="match status" value="1"/>
</dbReference>
<dbReference type="PROSITE" id="PS00301">
    <property type="entry name" value="G_TR_1"/>
    <property type="match status" value="1"/>
</dbReference>
<dbReference type="PROSITE" id="PS51722">
    <property type="entry name" value="G_TR_2"/>
    <property type="match status" value="1"/>
</dbReference>
<feature type="chain" id="PRO_1000023646" description="Peptide chain release factor 3">
    <location>
        <begin position="1"/>
        <end position="525"/>
    </location>
</feature>
<feature type="domain" description="tr-type G">
    <location>
        <begin position="9"/>
        <end position="276"/>
    </location>
</feature>
<feature type="binding site" evidence="1">
    <location>
        <begin position="18"/>
        <end position="25"/>
    </location>
    <ligand>
        <name>GTP</name>
        <dbReference type="ChEBI" id="CHEBI:37565"/>
    </ligand>
</feature>
<feature type="binding site" evidence="1">
    <location>
        <begin position="86"/>
        <end position="90"/>
    </location>
    <ligand>
        <name>GTP</name>
        <dbReference type="ChEBI" id="CHEBI:37565"/>
    </ligand>
</feature>
<feature type="binding site" evidence="1">
    <location>
        <begin position="140"/>
        <end position="143"/>
    </location>
    <ligand>
        <name>GTP</name>
        <dbReference type="ChEBI" id="CHEBI:37565"/>
    </ligand>
</feature>
<accession>A7NE28</accession>